<accession>Q96262</accession>
<accession>F4JUT4</accession>
<accession>Q56YV4</accession>
<accession>Q8H7H8</accession>
<accession>Q8LDH5</accession>
<name>PCAP1_ARATH</name>
<proteinExistence type="evidence at protein level"/>
<gene>
    <name type="primary">PCAP1</name>
    <name type="synonym">MDP25</name>
    <name type="ordered locus">At4g20260</name>
    <name type="ORF">F1C12.180</name>
</gene>
<sequence>MGYWNSKVVPKFKKLFEKNSAKKAAAAEATKTFDESKETINKEIEEKKTELQPKVVETYEATSAEVKALVRDPKVAGLKKNSAAVQKYLEELVKIEFPGSKAVSEASSSFGAGYVAGPVTFIFEKVSVFLPEEVKTKEIPVEEVKAEEPAKTEEPAKTEGTSGEKEEIVEETKKGETPETAVVEEKKPEVEEKKEEATPAPAVVETPVKEPETTTTAPVAEPPKP</sequence>
<dbReference type="EMBL" id="Y08061">
    <property type="protein sequence ID" value="CAA69300.1"/>
    <property type="molecule type" value="mRNA"/>
</dbReference>
<dbReference type="EMBL" id="AL022224">
    <property type="protein sequence ID" value="CAA18251.1"/>
    <property type="molecule type" value="Genomic_DNA"/>
</dbReference>
<dbReference type="EMBL" id="AL161552">
    <property type="protein sequence ID" value="CAB79026.1"/>
    <property type="molecule type" value="Genomic_DNA"/>
</dbReference>
<dbReference type="EMBL" id="CP002687">
    <property type="protein sequence ID" value="AEE84291.1"/>
    <property type="molecule type" value="Genomic_DNA"/>
</dbReference>
<dbReference type="EMBL" id="CP002687">
    <property type="protein sequence ID" value="AEE84292.1"/>
    <property type="molecule type" value="Genomic_DNA"/>
</dbReference>
<dbReference type="EMBL" id="CP002687">
    <property type="protein sequence ID" value="AEE84293.1"/>
    <property type="molecule type" value="Genomic_DNA"/>
</dbReference>
<dbReference type="EMBL" id="CP002687">
    <property type="protein sequence ID" value="AEE84294.1"/>
    <property type="molecule type" value="Genomic_DNA"/>
</dbReference>
<dbReference type="EMBL" id="CP002687">
    <property type="protein sequence ID" value="ANM67675.1"/>
    <property type="molecule type" value="Genomic_DNA"/>
</dbReference>
<dbReference type="EMBL" id="CP002687">
    <property type="protein sequence ID" value="ANM67676.1"/>
    <property type="molecule type" value="Genomic_DNA"/>
</dbReference>
<dbReference type="EMBL" id="CP002687">
    <property type="protein sequence ID" value="ANM67677.1"/>
    <property type="molecule type" value="Genomic_DNA"/>
</dbReference>
<dbReference type="EMBL" id="CP002687">
    <property type="protein sequence ID" value="ANM67678.1"/>
    <property type="molecule type" value="Genomic_DNA"/>
</dbReference>
<dbReference type="EMBL" id="AY093084">
    <property type="protein sequence ID" value="AAM13083.1"/>
    <property type="molecule type" value="mRNA"/>
</dbReference>
<dbReference type="EMBL" id="AY128768">
    <property type="protein sequence ID" value="AAM91168.1"/>
    <property type="molecule type" value="mRNA"/>
</dbReference>
<dbReference type="EMBL" id="AK317524">
    <property type="protein sequence ID" value="BAH20189.1"/>
    <property type="molecule type" value="mRNA"/>
</dbReference>
<dbReference type="EMBL" id="AY086004">
    <property type="protein sequence ID" value="AAM63213.1"/>
    <property type="molecule type" value="mRNA"/>
</dbReference>
<dbReference type="EMBL" id="AF083669">
    <property type="protein sequence ID" value="AAN60228.1"/>
    <property type="molecule type" value="mRNA"/>
</dbReference>
<dbReference type="EMBL" id="AK221216">
    <property type="protein sequence ID" value="BAD93780.1"/>
    <property type="molecule type" value="mRNA"/>
</dbReference>
<dbReference type="PIR" id="T05334">
    <property type="entry name" value="T05334"/>
</dbReference>
<dbReference type="RefSeq" id="NP_001031676.1">
    <molecule id="Q96262-1"/>
    <property type="nucleotide sequence ID" value="NM_001036599.2"/>
</dbReference>
<dbReference type="RefSeq" id="NP_001031677.1">
    <molecule id="Q96262-2"/>
    <property type="nucleotide sequence ID" value="NM_001036600.2"/>
</dbReference>
<dbReference type="RefSeq" id="NP_001320005.1">
    <molecule id="Q96262-1"/>
    <property type="nucleotide sequence ID" value="NM_001341407.1"/>
</dbReference>
<dbReference type="RefSeq" id="NP_001329492.1">
    <molecule id="Q96262-1"/>
    <property type="nucleotide sequence ID" value="NM_001341410.1"/>
</dbReference>
<dbReference type="RefSeq" id="NP_001329493.1">
    <molecule id="Q96262-1"/>
    <property type="nucleotide sequence ID" value="NM_001341409.1"/>
</dbReference>
<dbReference type="RefSeq" id="NP_001329494.1">
    <molecule id="Q96262-1"/>
    <property type="nucleotide sequence ID" value="NM_001341408.1"/>
</dbReference>
<dbReference type="RefSeq" id="NP_193759.1">
    <molecule id="Q96262-1"/>
    <property type="nucleotide sequence ID" value="NM_118145.4"/>
</dbReference>
<dbReference type="RefSeq" id="NP_849412.1">
    <molecule id="Q96262-1"/>
    <property type="nucleotide sequence ID" value="NM_179081.5"/>
</dbReference>
<dbReference type="SMR" id="Q96262"/>
<dbReference type="BioGRID" id="13065">
    <property type="interactions" value="8"/>
</dbReference>
<dbReference type="FunCoup" id="Q96262">
    <property type="interactions" value="368"/>
</dbReference>
<dbReference type="STRING" id="3702.Q96262"/>
<dbReference type="GlyGen" id="Q96262">
    <property type="glycosylation" value="1 site"/>
</dbReference>
<dbReference type="iPTMnet" id="Q96262"/>
<dbReference type="SwissPalm" id="Q96262"/>
<dbReference type="PaxDb" id="3702-AT4G20260.4"/>
<dbReference type="ProMEX" id="Q96262"/>
<dbReference type="ProteomicsDB" id="236709">
    <molecule id="Q96262-1"/>
</dbReference>
<dbReference type="EnsemblPlants" id="AT4G20260.1">
    <molecule id="Q96262-1"/>
    <property type="protein sequence ID" value="AT4G20260.1"/>
    <property type="gene ID" value="AT4G20260"/>
</dbReference>
<dbReference type="EnsemblPlants" id="AT4G20260.10">
    <molecule id="Q96262-1"/>
    <property type="protein sequence ID" value="AT4G20260.10"/>
    <property type="gene ID" value="AT4G20260"/>
</dbReference>
<dbReference type="EnsemblPlants" id="AT4G20260.2">
    <molecule id="Q96262-1"/>
    <property type="protein sequence ID" value="AT4G20260.2"/>
    <property type="gene ID" value="AT4G20260"/>
</dbReference>
<dbReference type="EnsemblPlants" id="AT4G20260.3">
    <molecule id="Q96262-1"/>
    <property type="protein sequence ID" value="AT4G20260.3"/>
    <property type="gene ID" value="AT4G20260"/>
</dbReference>
<dbReference type="EnsemblPlants" id="AT4G20260.4">
    <molecule id="Q96262-2"/>
    <property type="protein sequence ID" value="AT4G20260.4"/>
    <property type="gene ID" value="AT4G20260"/>
</dbReference>
<dbReference type="EnsemblPlants" id="AT4G20260.7">
    <molecule id="Q96262-1"/>
    <property type="protein sequence ID" value="AT4G20260.7"/>
    <property type="gene ID" value="AT4G20260"/>
</dbReference>
<dbReference type="EnsemblPlants" id="AT4G20260.8">
    <molecule id="Q96262-1"/>
    <property type="protein sequence ID" value="AT4G20260.8"/>
    <property type="gene ID" value="AT4G20260"/>
</dbReference>
<dbReference type="EnsemblPlants" id="AT4G20260.9">
    <molecule id="Q96262-1"/>
    <property type="protein sequence ID" value="AT4G20260.9"/>
    <property type="gene ID" value="AT4G20260"/>
</dbReference>
<dbReference type="GeneID" id="827773"/>
<dbReference type="Gramene" id="AT4G20260.1">
    <molecule id="Q96262-1"/>
    <property type="protein sequence ID" value="AT4G20260.1"/>
    <property type="gene ID" value="AT4G20260"/>
</dbReference>
<dbReference type="Gramene" id="AT4G20260.10">
    <molecule id="Q96262-1"/>
    <property type="protein sequence ID" value="AT4G20260.10"/>
    <property type="gene ID" value="AT4G20260"/>
</dbReference>
<dbReference type="Gramene" id="AT4G20260.2">
    <molecule id="Q96262-1"/>
    <property type="protein sequence ID" value="AT4G20260.2"/>
    <property type="gene ID" value="AT4G20260"/>
</dbReference>
<dbReference type="Gramene" id="AT4G20260.3">
    <molecule id="Q96262-1"/>
    <property type="protein sequence ID" value="AT4G20260.3"/>
    <property type="gene ID" value="AT4G20260"/>
</dbReference>
<dbReference type="Gramene" id="AT4G20260.4">
    <molecule id="Q96262-2"/>
    <property type="protein sequence ID" value="AT4G20260.4"/>
    <property type="gene ID" value="AT4G20260"/>
</dbReference>
<dbReference type="Gramene" id="AT4G20260.7">
    <molecule id="Q96262-1"/>
    <property type="protein sequence ID" value="AT4G20260.7"/>
    <property type="gene ID" value="AT4G20260"/>
</dbReference>
<dbReference type="Gramene" id="AT4G20260.8">
    <molecule id="Q96262-1"/>
    <property type="protein sequence ID" value="AT4G20260.8"/>
    <property type="gene ID" value="AT4G20260"/>
</dbReference>
<dbReference type="Gramene" id="AT4G20260.9">
    <molecule id="Q96262-1"/>
    <property type="protein sequence ID" value="AT4G20260.9"/>
    <property type="gene ID" value="AT4G20260"/>
</dbReference>
<dbReference type="KEGG" id="ath:AT4G20260"/>
<dbReference type="Araport" id="AT4G20260"/>
<dbReference type="TAIR" id="AT4G20260">
    <property type="gene designation" value="PCAP1"/>
</dbReference>
<dbReference type="eggNOG" id="ENOG502RZAR">
    <property type="taxonomic scope" value="Eukaryota"/>
</dbReference>
<dbReference type="InParanoid" id="Q96262"/>
<dbReference type="OMA" id="GINKEFE"/>
<dbReference type="PhylomeDB" id="Q96262"/>
<dbReference type="CD-CODE" id="4299E36E">
    <property type="entry name" value="Nucleolus"/>
</dbReference>
<dbReference type="PRO" id="PR:Q96262"/>
<dbReference type="Proteomes" id="UP000006548">
    <property type="component" value="Chromosome 4"/>
</dbReference>
<dbReference type="ExpressionAtlas" id="Q96262">
    <property type="expression patterns" value="baseline and differential"/>
</dbReference>
<dbReference type="GO" id="GO:0005881">
    <property type="term" value="C:cytoplasmic microtubule"/>
    <property type="evidence" value="ECO:0000314"/>
    <property type="project" value="UniProtKB"/>
</dbReference>
<dbReference type="GO" id="GO:0005829">
    <property type="term" value="C:cytosol"/>
    <property type="evidence" value="ECO:0007005"/>
    <property type="project" value="TAIR"/>
</dbReference>
<dbReference type="GO" id="GO:0043657">
    <property type="term" value="C:host cell"/>
    <property type="evidence" value="ECO:0007669"/>
    <property type="project" value="GOC"/>
</dbReference>
<dbReference type="GO" id="GO:0000325">
    <property type="term" value="C:plant-type vacuole"/>
    <property type="evidence" value="ECO:0007005"/>
    <property type="project" value="TAIR"/>
</dbReference>
<dbReference type="GO" id="GO:0005886">
    <property type="term" value="C:plasma membrane"/>
    <property type="evidence" value="ECO:0000314"/>
    <property type="project" value="UniProtKB"/>
</dbReference>
<dbReference type="GO" id="GO:0009506">
    <property type="term" value="C:plasmodesma"/>
    <property type="evidence" value="ECO:0000314"/>
    <property type="project" value="UniProtKB"/>
</dbReference>
<dbReference type="GO" id="GO:0005509">
    <property type="term" value="F:calcium ion binding"/>
    <property type="evidence" value="ECO:0000314"/>
    <property type="project" value="UniProtKB"/>
</dbReference>
<dbReference type="GO" id="GO:0005516">
    <property type="term" value="F:calmodulin binding"/>
    <property type="evidence" value="ECO:0000314"/>
    <property type="project" value="UniProtKB"/>
</dbReference>
<dbReference type="GO" id="GO:0005507">
    <property type="term" value="F:copper ion binding"/>
    <property type="evidence" value="ECO:0000314"/>
    <property type="project" value="UniProtKB"/>
</dbReference>
<dbReference type="GO" id="GO:0008017">
    <property type="term" value="F:microtubule binding"/>
    <property type="evidence" value="ECO:0000314"/>
    <property type="project" value="UniProtKB"/>
</dbReference>
<dbReference type="GO" id="GO:0005547">
    <property type="term" value="F:phosphatidylinositol-3,4,5-trisphosphate binding"/>
    <property type="evidence" value="ECO:0000314"/>
    <property type="project" value="UniProtKB"/>
</dbReference>
<dbReference type="GO" id="GO:0043325">
    <property type="term" value="F:phosphatidylinositol-3,4-bisphosphate binding"/>
    <property type="evidence" value="ECO:0000314"/>
    <property type="project" value="UniProtKB"/>
</dbReference>
<dbReference type="GO" id="GO:0080025">
    <property type="term" value="F:phosphatidylinositol-3,5-bisphosphate binding"/>
    <property type="evidence" value="ECO:0000314"/>
    <property type="project" value="UniProtKB"/>
</dbReference>
<dbReference type="GO" id="GO:0005546">
    <property type="term" value="F:phosphatidylinositol-4,5-bisphosphate binding"/>
    <property type="evidence" value="ECO:0000314"/>
    <property type="project" value="UniProtKB"/>
</dbReference>
<dbReference type="GO" id="GO:0071280">
    <property type="term" value="P:cellular response to copper ion"/>
    <property type="evidence" value="ECO:0000270"/>
    <property type="project" value="UniProtKB"/>
</dbReference>
<dbReference type="GO" id="GO:0071281">
    <property type="term" value="P:cellular response to iron ion"/>
    <property type="evidence" value="ECO:0000270"/>
    <property type="project" value="UniProtKB"/>
</dbReference>
<dbReference type="GO" id="GO:0071286">
    <property type="term" value="P:cellular response to magnesium ion"/>
    <property type="evidence" value="ECO:0000270"/>
    <property type="project" value="UniProtKB"/>
</dbReference>
<dbReference type="GO" id="GO:0010350">
    <property type="term" value="P:cellular response to magnesium starvation"/>
    <property type="evidence" value="ECO:0000270"/>
    <property type="project" value="UniProtKB"/>
</dbReference>
<dbReference type="GO" id="GO:0071325">
    <property type="term" value="P:cellular response to mannitol stimulus"/>
    <property type="evidence" value="ECO:0000270"/>
    <property type="project" value="UniProtKB"/>
</dbReference>
<dbReference type="GO" id="GO:0071219">
    <property type="term" value="P:cellular response to molecule of bacterial origin"/>
    <property type="evidence" value="ECO:0000270"/>
    <property type="project" value="UniProtKB"/>
</dbReference>
<dbReference type="GO" id="GO:0035865">
    <property type="term" value="P:cellular response to potassium ion"/>
    <property type="evidence" value="ECO:0000270"/>
    <property type="project" value="UniProtKB"/>
</dbReference>
<dbReference type="GO" id="GO:0071472">
    <property type="term" value="P:cellular response to salt stress"/>
    <property type="evidence" value="ECO:0000270"/>
    <property type="project" value="UniProtKB"/>
</dbReference>
<dbReference type="GO" id="GO:0072709">
    <property type="term" value="P:cellular response to sorbitol"/>
    <property type="evidence" value="ECO:0000270"/>
    <property type="project" value="UniProtKB"/>
</dbReference>
<dbReference type="GO" id="GO:0043622">
    <property type="term" value="P:cortical microtubule organization"/>
    <property type="evidence" value="ECO:0000314"/>
    <property type="project" value="UniProtKB"/>
</dbReference>
<dbReference type="GO" id="GO:0075733">
    <property type="term" value="P:intracellular transport of virus"/>
    <property type="evidence" value="ECO:0000315"/>
    <property type="project" value="TAIR"/>
</dbReference>
<dbReference type="GO" id="GO:0006499">
    <property type="term" value="P:N-terminal protein myristoylation"/>
    <property type="evidence" value="ECO:0000315"/>
    <property type="project" value="UniProtKB"/>
</dbReference>
<dbReference type="GO" id="GO:0031115">
    <property type="term" value="P:negative regulation of microtubule polymerization"/>
    <property type="evidence" value="ECO:0000314"/>
    <property type="project" value="TAIR"/>
</dbReference>
<dbReference type="GO" id="GO:0051511">
    <property type="term" value="P:negative regulation of unidimensional cell growth"/>
    <property type="evidence" value="ECO:0000315"/>
    <property type="project" value="UniProtKB"/>
</dbReference>
<dbReference type="GO" id="GO:0031117">
    <property type="term" value="P:positive regulation of microtubule depolymerization"/>
    <property type="evidence" value="ECO:0000314"/>
    <property type="project" value="UniProtKB"/>
</dbReference>
<dbReference type="GO" id="GO:0051592">
    <property type="term" value="P:response to calcium ion"/>
    <property type="evidence" value="ECO:0000314"/>
    <property type="project" value="TAIR"/>
</dbReference>
<dbReference type="GO" id="GO:0009409">
    <property type="term" value="P:response to cold"/>
    <property type="evidence" value="ECO:0000270"/>
    <property type="project" value="TAIR"/>
</dbReference>
<dbReference type="GO" id="GO:0009414">
    <property type="term" value="P:response to water deprivation"/>
    <property type="evidence" value="ECO:0000270"/>
    <property type="project" value="UniProtKB"/>
</dbReference>
<dbReference type="GO" id="GO:0090332">
    <property type="term" value="P:stomatal closure"/>
    <property type="evidence" value="ECO:0000315"/>
    <property type="project" value="TAIR"/>
</dbReference>
<dbReference type="InterPro" id="IPR008469">
    <property type="entry name" value="DREPP"/>
</dbReference>
<dbReference type="PANTHER" id="PTHR38522">
    <property type="entry name" value="PLASMA MEMBRANE-ASSOCIATED CATION-BINDING PROTEIN 1"/>
    <property type="match status" value="1"/>
</dbReference>
<dbReference type="PANTHER" id="PTHR38522:SF2">
    <property type="entry name" value="PLASMA MEMBRANE-ASSOCIATED CATION-BINDING PROTEIN 1"/>
    <property type="match status" value="1"/>
</dbReference>
<dbReference type="Pfam" id="PF05558">
    <property type="entry name" value="DREPP"/>
    <property type="match status" value="1"/>
</dbReference>
<comment type="function">
    <text evidence="3 4 6 7 8">May be involved in intracellular signaling through interaction with PtdInsPs and calmodulin (CaM); may keep PtdInsPs attached to the plasma membrane until Ca(2+)-CaM reaches a competitive concentration subsequent to an increase triggered by a stimulus, thus leading to PtdInsPs release and subsequent activation of InsPs-dependent signaling cascade. Interacts competitively at the N-terminus with calcium ions and CaM (in a calcium-dependent manner), and with the phosphatidylinositol phosphates PtdIns(3,4,5)P(3), PtdIns(3,4)P(2), PtdIns(4,5)P(2) and PtdIns(3,5)P(2). Also binds weakly to PtdIns(3)P, PtdIns(4)P and PtdIns(5)P. Negative regulator of hypocotyl cell elongation by destabilizing cortical microtubules in a calcium-dependent manner. Binds directly to and destabilized microtubules to enhance microtubule depolymerization when cytoplasmic calcium increases. In case of Turnip mosaic virus (TuMV) infection, confers sensitivity by promoting viral cell-to-cell movement through interaction with viral P3N-PIPO.</text>
</comment>
<comment type="cofactor">
    <cofactor evidence="5">
        <name>Cu(2+)</name>
        <dbReference type="ChEBI" id="CHEBI:29036"/>
    </cofactor>
    <text evidence="5">Binds 6 Cu(2+) ions per subunit. Decreased of the heat stability in the presence of metal ions (e.g. K(+), Ca(2+), Cu(2+), Sr(2+) and Mg(2+)).</text>
</comment>
<comment type="biophysicochemical properties">
    <absorption>
        <max evidence="5">345 nm</max>
        <text>Results were obtained when excited at 277 nm. In the presence of copper ions, the maximum absorption peak disappears.</text>
    </absorption>
</comment>
<comment type="subunit">
    <text evidence="8">Interacts with Turnip mosaic virus (TuMV) P3N-PIPO.</text>
</comment>
<comment type="subcellular location">
    <subcellularLocation>
        <location evidence="2 10">Cell membrane</location>
        <topology>Lipid-anchor</topology>
    </subcellularLocation>
    <subcellularLocation>
        <location>Cytoplasm</location>
    </subcellularLocation>
    <subcellularLocation>
        <location>Cytoplasm</location>
        <location>Cytoskeleton</location>
    </subcellularLocation>
    <subcellularLocation>
        <location>Cell junction</location>
        <location>Plasmodesma</location>
    </subcellularLocation>
    <text>Shuttles from plasma membrane to cytoplasm (e.g. colocalizes with cortical microtubules) upon calcium levels increase. Co-localizes with Turnip mosaic virus (TuMV) P3N-PIPO at the plasmodesmata.</text>
</comment>
<comment type="alternative products">
    <event type="alternative splicing"/>
    <isoform>
        <id>Q96262-1</id>
        <name>1</name>
        <sequence type="displayed"/>
    </isoform>
    <isoform>
        <id>Q96262-2</id>
        <name>2</name>
        <sequence type="described" ref="VSP_044347"/>
    </isoform>
    <text>Additional isoforms seem to exist.</text>
</comment>
<comment type="tissue specificity">
    <text evidence="3 4 7">Mostly expressed in the basal region of hypocotyls. Expressed in seedlings, roots, shoots, stems, leaves (e.g. in epidermis and vascular tissues), flowers (e.g. in pistils and anthers) and siliques (at protein level).</text>
</comment>
<comment type="induction">
    <text evidence="3">Accumulates in response to CuCl(2), mannitol, sorbitol, and flagellin oligopeptide (e.g. flg22) treatments. Induced after long treatment (2 days) with NaCl, KCl, MgCl(2) and FeCl(3). Slight induction in Mg(2+) deprivation. Slightly repressed by dehydration.</text>
</comment>
<comment type="disruption phenotype">
    <text evidence="7 8">Long etiolated hypocotyls. Reduced accumulation and cell-to-cell movement of Turnip mosaic virus (TuMV) leading to an enhanced plant resistance.</text>
</comment>
<comment type="similarity">
    <text evidence="9">Belongs to the DREPP family.</text>
</comment>
<reference key="1">
    <citation type="submission" date="1996-09" db="EMBL/GenBank/DDBJ databases">
        <title>Sequence of novel endomembrane-associated protein of Arabidopsis thaliana.</title>
        <authorList>
            <person name="Dupree P."/>
            <person name="Prime T.A."/>
            <person name="Packman L.C."/>
        </authorList>
    </citation>
    <scope>NUCLEOTIDE SEQUENCE [MRNA] (ISOFORM 1)</scope>
    <source>
        <strain>cv. Columbia</strain>
    </source>
</reference>
<reference key="2">
    <citation type="journal article" date="1999" name="Nature">
        <title>Sequence and analysis of chromosome 4 of the plant Arabidopsis thaliana.</title>
        <authorList>
            <person name="Mayer K.F.X."/>
            <person name="Schueller C."/>
            <person name="Wambutt R."/>
            <person name="Murphy G."/>
            <person name="Volckaert G."/>
            <person name="Pohl T."/>
            <person name="Duesterhoeft A."/>
            <person name="Stiekema W."/>
            <person name="Entian K.-D."/>
            <person name="Terryn N."/>
            <person name="Harris B."/>
            <person name="Ansorge W."/>
            <person name="Brandt P."/>
            <person name="Grivell L.A."/>
            <person name="Rieger M."/>
            <person name="Weichselgartner M."/>
            <person name="de Simone V."/>
            <person name="Obermaier B."/>
            <person name="Mache R."/>
            <person name="Mueller M."/>
            <person name="Kreis M."/>
            <person name="Delseny M."/>
            <person name="Puigdomenech P."/>
            <person name="Watson M."/>
            <person name="Schmidtheini T."/>
            <person name="Reichert B."/>
            <person name="Portetelle D."/>
            <person name="Perez-Alonso M."/>
            <person name="Boutry M."/>
            <person name="Bancroft I."/>
            <person name="Vos P."/>
            <person name="Hoheisel J."/>
            <person name="Zimmermann W."/>
            <person name="Wedler H."/>
            <person name="Ridley P."/>
            <person name="Langham S.-A."/>
            <person name="McCullagh B."/>
            <person name="Bilham L."/>
            <person name="Robben J."/>
            <person name="van der Schueren J."/>
            <person name="Grymonprez B."/>
            <person name="Chuang Y.-J."/>
            <person name="Vandenbussche F."/>
            <person name="Braeken M."/>
            <person name="Weltjens I."/>
            <person name="Voet M."/>
            <person name="Bastiaens I."/>
            <person name="Aert R."/>
            <person name="Defoor E."/>
            <person name="Weitzenegger T."/>
            <person name="Bothe G."/>
            <person name="Ramsperger U."/>
            <person name="Hilbert H."/>
            <person name="Braun M."/>
            <person name="Holzer E."/>
            <person name="Brandt A."/>
            <person name="Peters S."/>
            <person name="van Staveren M."/>
            <person name="Dirkse W."/>
            <person name="Mooijman P."/>
            <person name="Klein Lankhorst R."/>
            <person name="Rose M."/>
            <person name="Hauf J."/>
            <person name="Koetter P."/>
            <person name="Berneiser S."/>
            <person name="Hempel S."/>
            <person name="Feldpausch M."/>
            <person name="Lamberth S."/>
            <person name="Van den Daele H."/>
            <person name="De Keyser A."/>
            <person name="Buysshaert C."/>
            <person name="Gielen J."/>
            <person name="Villarroel R."/>
            <person name="De Clercq R."/>
            <person name="van Montagu M."/>
            <person name="Rogers J."/>
            <person name="Cronin A."/>
            <person name="Quail M.A."/>
            <person name="Bray-Allen S."/>
            <person name="Clark L."/>
            <person name="Doggett J."/>
            <person name="Hall S."/>
            <person name="Kay M."/>
            <person name="Lennard N."/>
            <person name="McLay K."/>
            <person name="Mayes R."/>
            <person name="Pettett A."/>
            <person name="Rajandream M.A."/>
            <person name="Lyne M."/>
            <person name="Benes V."/>
            <person name="Rechmann S."/>
            <person name="Borkova D."/>
            <person name="Bloecker H."/>
            <person name="Scharfe M."/>
            <person name="Grimm M."/>
            <person name="Loehnert T.-H."/>
            <person name="Dose S."/>
            <person name="de Haan M."/>
            <person name="Maarse A.C."/>
            <person name="Schaefer M."/>
            <person name="Mueller-Auer S."/>
            <person name="Gabel C."/>
            <person name="Fuchs M."/>
            <person name="Fartmann B."/>
            <person name="Granderath K."/>
            <person name="Dauner D."/>
            <person name="Herzl A."/>
            <person name="Neumann S."/>
            <person name="Argiriou A."/>
            <person name="Vitale D."/>
            <person name="Liguori R."/>
            <person name="Piravandi E."/>
            <person name="Massenet O."/>
            <person name="Quigley F."/>
            <person name="Clabauld G."/>
            <person name="Muendlein A."/>
            <person name="Felber R."/>
            <person name="Schnabl S."/>
            <person name="Hiller R."/>
            <person name="Schmidt W."/>
            <person name="Lecharny A."/>
            <person name="Aubourg S."/>
            <person name="Chefdor F."/>
            <person name="Cooke R."/>
            <person name="Berger C."/>
            <person name="Monfort A."/>
            <person name="Casacuberta E."/>
            <person name="Gibbons T."/>
            <person name="Weber N."/>
            <person name="Vandenbol M."/>
            <person name="Bargues M."/>
            <person name="Terol J."/>
            <person name="Torres A."/>
            <person name="Perez-Perez A."/>
            <person name="Purnelle B."/>
            <person name="Bent E."/>
            <person name="Johnson S."/>
            <person name="Tacon D."/>
            <person name="Jesse T."/>
            <person name="Heijnen L."/>
            <person name="Schwarz S."/>
            <person name="Scholler P."/>
            <person name="Heber S."/>
            <person name="Francs P."/>
            <person name="Bielke C."/>
            <person name="Frishman D."/>
            <person name="Haase D."/>
            <person name="Lemcke K."/>
            <person name="Mewes H.-W."/>
            <person name="Stocker S."/>
            <person name="Zaccaria P."/>
            <person name="Bevan M."/>
            <person name="Wilson R.K."/>
            <person name="de la Bastide M."/>
            <person name="Habermann K."/>
            <person name="Parnell L."/>
            <person name="Dedhia N."/>
            <person name="Gnoj L."/>
            <person name="Schutz K."/>
            <person name="Huang E."/>
            <person name="Spiegel L."/>
            <person name="Sekhon M."/>
            <person name="Murray J."/>
            <person name="Sheet P."/>
            <person name="Cordes M."/>
            <person name="Abu-Threideh J."/>
            <person name="Stoneking T."/>
            <person name="Kalicki J."/>
            <person name="Graves T."/>
            <person name="Harmon G."/>
            <person name="Edwards J."/>
            <person name="Latreille P."/>
            <person name="Courtney L."/>
            <person name="Cloud J."/>
            <person name="Abbott A."/>
            <person name="Scott K."/>
            <person name="Johnson D."/>
            <person name="Minx P."/>
            <person name="Bentley D."/>
            <person name="Fulton B."/>
            <person name="Miller N."/>
            <person name="Greco T."/>
            <person name="Kemp K."/>
            <person name="Kramer J."/>
            <person name="Fulton L."/>
            <person name="Mardis E."/>
            <person name="Dante M."/>
            <person name="Pepin K."/>
            <person name="Hillier L.W."/>
            <person name="Nelson J."/>
            <person name="Spieth J."/>
            <person name="Ryan E."/>
            <person name="Andrews S."/>
            <person name="Geisel C."/>
            <person name="Layman D."/>
            <person name="Du H."/>
            <person name="Ali J."/>
            <person name="Berghoff A."/>
            <person name="Jones K."/>
            <person name="Drone K."/>
            <person name="Cotton M."/>
            <person name="Joshu C."/>
            <person name="Antonoiu B."/>
            <person name="Zidanic M."/>
            <person name="Strong C."/>
            <person name="Sun H."/>
            <person name="Lamar B."/>
            <person name="Yordan C."/>
            <person name="Ma P."/>
            <person name="Zhong J."/>
            <person name="Preston R."/>
            <person name="Vil D."/>
            <person name="Shekher M."/>
            <person name="Matero A."/>
            <person name="Shah R."/>
            <person name="Swaby I.K."/>
            <person name="O'Shaughnessy A."/>
            <person name="Rodriguez M."/>
            <person name="Hoffman J."/>
            <person name="Till S."/>
            <person name="Granat S."/>
            <person name="Shohdy N."/>
            <person name="Hasegawa A."/>
            <person name="Hameed A."/>
            <person name="Lodhi M."/>
            <person name="Johnson A."/>
            <person name="Chen E."/>
            <person name="Marra M.A."/>
            <person name="Martienssen R."/>
            <person name="McCombie W.R."/>
        </authorList>
    </citation>
    <scope>NUCLEOTIDE SEQUENCE [LARGE SCALE GENOMIC DNA]</scope>
    <source>
        <strain>cv. Columbia</strain>
    </source>
</reference>
<reference key="3">
    <citation type="journal article" date="2017" name="Plant J.">
        <title>Araport11: a complete reannotation of the Arabidopsis thaliana reference genome.</title>
        <authorList>
            <person name="Cheng C.Y."/>
            <person name="Krishnakumar V."/>
            <person name="Chan A.P."/>
            <person name="Thibaud-Nissen F."/>
            <person name="Schobel S."/>
            <person name="Town C.D."/>
        </authorList>
    </citation>
    <scope>GENOME REANNOTATION</scope>
    <source>
        <strain>cv. Columbia</strain>
    </source>
</reference>
<reference key="4">
    <citation type="journal article" date="2003" name="Science">
        <title>Empirical analysis of transcriptional activity in the Arabidopsis genome.</title>
        <authorList>
            <person name="Yamada K."/>
            <person name="Lim J."/>
            <person name="Dale J.M."/>
            <person name="Chen H."/>
            <person name="Shinn P."/>
            <person name="Palm C.J."/>
            <person name="Southwick A.M."/>
            <person name="Wu H.C."/>
            <person name="Kim C.J."/>
            <person name="Nguyen M."/>
            <person name="Pham P.K."/>
            <person name="Cheuk R.F."/>
            <person name="Karlin-Newmann G."/>
            <person name="Liu S.X."/>
            <person name="Lam B."/>
            <person name="Sakano H."/>
            <person name="Wu T."/>
            <person name="Yu G."/>
            <person name="Miranda M."/>
            <person name="Quach H.L."/>
            <person name="Tripp M."/>
            <person name="Chang C.H."/>
            <person name="Lee J.M."/>
            <person name="Toriumi M.J."/>
            <person name="Chan M.M."/>
            <person name="Tang C.C."/>
            <person name="Onodera C.S."/>
            <person name="Deng J.M."/>
            <person name="Akiyama K."/>
            <person name="Ansari Y."/>
            <person name="Arakawa T."/>
            <person name="Banh J."/>
            <person name="Banno F."/>
            <person name="Bowser L."/>
            <person name="Brooks S.Y."/>
            <person name="Carninci P."/>
            <person name="Chao Q."/>
            <person name="Choy N."/>
            <person name="Enju A."/>
            <person name="Goldsmith A.D."/>
            <person name="Gurjal M."/>
            <person name="Hansen N.F."/>
            <person name="Hayashizaki Y."/>
            <person name="Johnson-Hopson C."/>
            <person name="Hsuan V.W."/>
            <person name="Iida K."/>
            <person name="Karnes M."/>
            <person name="Khan S."/>
            <person name="Koesema E."/>
            <person name="Ishida J."/>
            <person name="Jiang P.X."/>
            <person name="Jones T."/>
            <person name="Kawai J."/>
            <person name="Kamiya A."/>
            <person name="Meyers C."/>
            <person name="Nakajima M."/>
            <person name="Narusaka M."/>
            <person name="Seki M."/>
            <person name="Sakurai T."/>
            <person name="Satou M."/>
            <person name="Tamse R."/>
            <person name="Vaysberg M."/>
            <person name="Wallender E.K."/>
            <person name="Wong C."/>
            <person name="Yamamura Y."/>
            <person name="Yuan S."/>
            <person name="Shinozaki K."/>
            <person name="Davis R.W."/>
            <person name="Theologis A."/>
            <person name="Ecker J.R."/>
        </authorList>
    </citation>
    <scope>NUCLEOTIDE SEQUENCE [LARGE SCALE MRNA] (ISOFORM 1)</scope>
    <source>
        <strain>cv. Columbia</strain>
    </source>
</reference>
<reference key="5">
    <citation type="journal article" date="2009" name="DNA Res.">
        <title>Analysis of multiple occurrences of alternative splicing events in Arabidopsis thaliana using novel sequenced full-length cDNAs.</title>
        <authorList>
            <person name="Iida K."/>
            <person name="Fukami-Kobayashi K."/>
            <person name="Toyoda A."/>
            <person name="Sakaki Y."/>
            <person name="Kobayashi M."/>
            <person name="Seki M."/>
            <person name="Shinozaki K."/>
        </authorList>
    </citation>
    <scope>NUCLEOTIDE SEQUENCE [LARGE SCALE MRNA] (ISOFORM 1)</scope>
    <source>
        <strain>cv. Columbia</strain>
    </source>
</reference>
<reference key="6">
    <citation type="submission" date="2002-03" db="EMBL/GenBank/DDBJ databases">
        <title>Full-length cDNA from Arabidopsis thaliana.</title>
        <authorList>
            <person name="Brover V.V."/>
            <person name="Troukhan M.E."/>
            <person name="Alexandrov N.A."/>
            <person name="Lu Y.-P."/>
            <person name="Flavell R.B."/>
            <person name="Feldmann K.A."/>
        </authorList>
    </citation>
    <scope>NUCLEOTIDE SEQUENCE [LARGE SCALE MRNA] (ISOFORM 1)</scope>
</reference>
<reference key="7">
    <citation type="submission" date="1998-08" db="EMBL/GenBank/DDBJ databases">
        <title>Signal peptide selection derived cDNAs from Arabidopsis thaliana leaves and guard cells.</title>
        <authorList>
            <person name="Stracke R."/>
            <person name="Palme K."/>
        </authorList>
    </citation>
    <scope>NUCLEOTIDE SEQUENCE [MRNA] OF 1-167 (ISOFORM 1)</scope>
</reference>
<reference key="8">
    <citation type="submission" date="2005-03" db="EMBL/GenBank/DDBJ databases">
        <title>Large-scale analysis of RIKEN Arabidopsis full-length (RAFL) cDNAs.</title>
        <authorList>
            <person name="Totoki Y."/>
            <person name="Seki M."/>
            <person name="Ishida J."/>
            <person name="Nakajima M."/>
            <person name="Enju A."/>
            <person name="Kamiya A."/>
            <person name="Narusaka M."/>
            <person name="Shin-i T."/>
            <person name="Nakagawa M."/>
            <person name="Sakamoto N."/>
            <person name="Oishi K."/>
            <person name="Kohara Y."/>
            <person name="Kobayashi M."/>
            <person name="Toyoda A."/>
            <person name="Sakaki Y."/>
            <person name="Sakurai T."/>
            <person name="Iida K."/>
            <person name="Akiyama K."/>
            <person name="Satou M."/>
            <person name="Toyoda T."/>
            <person name="Konagaya A."/>
            <person name="Carninci P."/>
            <person name="Kawai J."/>
            <person name="Hayashizaki Y."/>
            <person name="Shinozaki K."/>
        </authorList>
    </citation>
    <scope>NUCLEOTIDE SEQUENCE [LARGE SCALE MRNA] OF 91-225 (ISOFORMS 1/2)</scope>
    <source>
        <strain>cv. Columbia</strain>
    </source>
</reference>
<reference key="9">
    <citation type="journal article" date="2003" name="J. Biol. Chem.">
        <title>A plasma membrane syntaxin is phosphorylated in response to the bacterial elicitor flagellin.</title>
        <authorList>
            <person name="Nuehse T.S."/>
            <person name="Boller T."/>
            <person name="Peck S.C."/>
        </authorList>
    </citation>
    <scope>SUBCELLULAR LOCATION</scope>
</reference>
<reference key="10">
    <citation type="journal article" date="2004" name="Mol. Cell. Proteomics">
        <title>Identification of new intrinsic proteins in Arabidopsis plasma membrane proteome.</title>
        <authorList>
            <person name="Marmagne A."/>
            <person name="Rouet M.-A."/>
            <person name="Ferro M."/>
            <person name="Rolland N."/>
            <person name="Alcon C."/>
            <person name="Joyard J."/>
            <person name="Garin J."/>
            <person name="Barbier-Brygoo H."/>
            <person name="Ephritikhine G."/>
        </authorList>
    </citation>
    <scope>IDENTIFICATION BY MASS SPECTROMETRY</scope>
    <scope>SUBCELLULAR LOCATION</scope>
</reference>
<reference key="11">
    <citation type="journal article" date="2007" name="J. Exp. Bot.">
        <title>Molecular properties of a novel, hydrophilic cation-binding protein associated with the plasma membrane.</title>
        <authorList>
            <person name="Ide Y."/>
            <person name="Nagasaki N."/>
            <person name="Tomioka R."/>
            <person name="Suito M."/>
            <person name="Kamiya T."/>
            <person name="Maeshima M."/>
        </authorList>
    </citation>
    <scope>FUNCTION AS CALCIUM-BINDING PROTEIN</scope>
    <scope>SUBCELLULAR LOCATION</scope>
    <scope>TISSUE SPECIFICITY</scope>
    <scope>INDUCTION BY SALTS; SUGARS AND FLAGELLIN</scope>
    <source>
        <strain>cv. Columbia</strain>
    </source>
</reference>
<reference key="12">
    <citation type="journal article" date="2007" name="Mol. Cell. Proteomics">
        <title>A high content in lipid-modified peripheral proteins and integral receptor kinases features in the arabidopsis plasma membrane proteome.</title>
        <authorList>
            <person name="Marmagne A."/>
            <person name="Ferro M."/>
            <person name="Meinnel T."/>
            <person name="Bruley C."/>
            <person name="Kuhn L."/>
            <person name="Garin J."/>
            <person name="Barbier-Brygoo H."/>
            <person name="Ephritikhine G."/>
        </authorList>
    </citation>
    <scope>IDENTIFICATION BY MASS SPECTROMETRY</scope>
    <scope>SUBCELLULAR LOCATION [LARGE SCALE ANALYSIS]</scope>
</reference>
<reference key="13">
    <citation type="journal article" date="2008" name="FEBS J.">
        <title>A hydrophilic cation-binding protein of Arabidopsis thaliana, AtPCaP1, is localized to plasma membrane via N-myristoylation and interacts with calmodulin and the phosphatidylinositol phosphates PtdIns(3,4,5)P(3) and PtdIns(3,5)P(2).</title>
        <authorList>
            <person name="Nagasaki N."/>
            <person name="Tomioka R."/>
            <person name="Maeshima M."/>
        </authorList>
    </citation>
    <scope>FUNCTION</scope>
    <scope>MYRISTOYLATION AT GLY-2</scope>
    <scope>MUTAGENESIS OF GLY-2</scope>
    <scope>SUBCELLULAR LOCATION</scope>
    <scope>TISSUE SPECIFICITY</scope>
    <source>
        <strain>cv. Columbia</strain>
    </source>
</reference>
<reference key="14">
    <citation type="journal article" date="2008" name="J. Biochem.">
        <title>A plasma membrane-associated protein of Arabidopsis thaliana AtPCaP1 binds copper ions and changes its higher order structure.</title>
        <authorList>
            <person name="Nagasaki-Takeuchi N."/>
            <person name="Miyano M."/>
            <person name="Maeshima M."/>
        </authorList>
    </citation>
    <scope>COFACTOR</scope>
    <scope>BIOPHYSICOCHEMICAL PROPERTIES</scope>
</reference>
<reference key="15">
    <citation type="journal article" date="2009" name="Plant Physiol.">
        <title>Large-scale Arabidopsis phosphoproteome profiling reveals novel chloroplast kinase substrates and phosphorylation networks.</title>
        <authorList>
            <person name="Reiland S."/>
            <person name="Messerli G."/>
            <person name="Baerenfaller K."/>
            <person name="Gerrits B."/>
            <person name="Endler A."/>
            <person name="Grossmann J."/>
            <person name="Gruissem W."/>
            <person name="Baginsky S."/>
        </authorList>
    </citation>
    <scope>PHOSPHORYLATION [LARGE SCALE ANALYSIS] AT THR-177</scope>
    <scope>IDENTIFICATION BY MASS SPECTROMETRY [LARGE SCALE ANALYSIS]</scope>
</reference>
<reference key="16">
    <citation type="journal article" date="2010" name="Plant Signal. Behav.">
        <title>PCaPs, possible regulators of PtdInsP signals on plasma membrane.</title>
        <authorList>
            <person name="Kato M."/>
            <person name="Nagasaki-Takeuchi N."/>
            <person name="Ide Y."/>
            <person name="Tomioka R."/>
            <person name="Maeshima M."/>
        </authorList>
    </citation>
    <scope>FUNCTION</scope>
    <scope>REVIEW</scope>
</reference>
<reference key="17">
    <citation type="journal article" date="2011" name="Plant Cell">
        <title>MDP25, a novel calcium regulatory protein, mediates hypocotyl cell elongation by destabilizing cortical microtubules in Arabidopsis.</title>
        <authorList>
            <person name="Li J."/>
            <person name="Wang X."/>
            <person name="Qin T."/>
            <person name="Zhang Y."/>
            <person name="Liu X."/>
            <person name="Sun J."/>
            <person name="Zhou Y."/>
            <person name="Zhu L."/>
            <person name="Zhang Z."/>
            <person name="Yuan M."/>
            <person name="Mao T."/>
        </authorList>
    </citation>
    <scope>FUNCTION</scope>
    <scope>DISRUPTION PHENOTYPE</scope>
    <scope>SUBCELLULAR LOCATION</scope>
    <scope>TISSUE SPECIFICITY</scope>
</reference>
<reference key="18">
    <citation type="journal article" date="2012" name="J. Proteome Res.">
        <title>Identification of phosphoproteins in Arabidopsis thaliana leaves using polyethylene glycol fractionation, immobilized metal-ion affinity chromatography, two-dimensional gel electrophoresis and mass spectrometry.</title>
        <authorList>
            <person name="Aryal U.K."/>
            <person name="Krochko J.E."/>
            <person name="Ross A.R."/>
        </authorList>
    </citation>
    <scope>PHOSPHORYLATION [LARGE SCALE ANALYSIS] AT THR-32; SER-107 AND THR-152</scope>
    <scope>IDENTIFICATION BY MASS SPECTROMETRY [LARGE SCALE ANALYSIS]</scope>
</reference>
<reference key="19">
    <citation type="journal article" date="2012" name="PLoS Pathog.">
        <title>Interaction of the trans-frame potyvirus protein P3N-PIPO with host protein PCaP1 facilitates potyvirus movement.</title>
        <authorList>
            <person name="Vijayapalani P."/>
            <person name="Maeshima M."/>
            <person name="Nagasaki-Takekuchi N."/>
            <person name="Miller W.A."/>
        </authorList>
    </citation>
    <scope>FUNCTION</scope>
    <scope>DISRUPTION PHENOTYPE</scope>
    <scope>INTERACTION WITH VIRAL P3N-PIPO</scope>
    <scope>MUTAGENESIS OF GLY-2</scope>
    <scope>SUBCELLULAR LOCATION</scope>
</reference>
<evidence type="ECO:0000256" key="1">
    <source>
        <dbReference type="SAM" id="MobiDB-lite"/>
    </source>
</evidence>
<evidence type="ECO:0000269" key="2">
    <source>
    </source>
</evidence>
<evidence type="ECO:0000269" key="3">
    <source>
    </source>
</evidence>
<evidence type="ECO:0000269" key="4">
    <source>
    </source>
</evidence>
<evidence type="ECO:0000269" key="5">
    <source>
    </source>
</evidence>
<evidence type="ECO:0000269" key="6">
    <source>
    </source>
</evidence>
<evidence type="ECO:0000269" key="7">
    <source>
    </source>
</evidence>
<evidence type="ECO:0000269" key="8">
    <source>
    </source>
</evidence>
<evidence type="ECO:0000305" key="9"/>
<evidence type="ECO:0000305" key="10">
    <source>
    </source>
</evidence>
<evidence type="ECO:0007744" key="11">
    <source>
    </source>
</evidence>
<evidence type="ECO:0007744" key="12">
    <source>
    </source>
</evidence>
<feature type="initiator methionine" description="Removed">
    <location>
        <position position="1"/>
    </location>
</feature>
<feature type="chain" id="PRO_0000419768" description="Plasma membrane-associated cation-binding protein 1">
    <location>
        <begin position="2"/>
        <end position="225"/>
    </location>
</feature>
<feature type="region of interest" description="Disordered" evidence="1">
    <location>
        <begin position="140"/>
        <end position="225"/>
    </location>
</feature>
<feature type="compositionally biased region" description="Basic and acidic residues" evidence="1">
    <location>
        <begin position="140"/>
        <end position="197"/>
    </location>
</feature>
<feature type="modified residue" description="Phosphothreonine" evidence="12">
    <location>
        <position position="32"/>
    </location>
</feature>
<feature type="modified residue" description="Phosphoserine" evidence="12">
    <location>
        <position position="107"/>
    </location>
</feature>
<feature type="modified residue" description="Phosphothreonine" evidence="12">
    <location>
        <position position="152"/>
    </location>
</feature>
<feature type="modified residue" description="Phosphothreonine" evidence="11">
    <location>
        <position position="177"/>
    </location>
</feature>
<feature type="lipid moiety-binding region" description="N-myristoyl glycine" evidence="4">
    <location>
        <position position="2"/>
    </location>
</feature>
<feature type="splice variant" id="VSP_044347" description="In isoform 2." evidence="9">
    <original>K</original>
    <variation>KQ</variation>
    <location>
        <position position="67"/>
    </location>
</feature>
<feature type="mutagenesis site" description="No N-myristoylation leading to cytoplasmic location, but normal interaction with Turnip mosaic virus (TuMV) P3N-PIPO." evidence="4 8">
    <original>G</original>
    <variation>A</variation>
    <location>
        <position position="2"/>
    </location>
</feature>
<feature type="sequence conflict" description="In Ref. 6; AAM63213." evidence="9" ref="6">
    <original>G</original>
    <variation>D</variation>
    <location>
        <position position="175"/>
    </location>
</feature>
<feature type="sequence conflict" description="In Ref. 6; AAM63213." evidence="9" ref="6">
    <location>
        <position position="213"/>
    </location>
</feature>
<protein>
    <recommendedName>
        <fullName>Plasma membrane-associated cation-binding protein 1</fullName>
        <shortName>AtPCAP1</shortName>
    </recommendedName>
    <alternativeName>
        <fullName>Microtubule-destabilizing protein 25</fullName>
    </alternativeName>
</protein>
<keyword id="KW-0025">Alternative splicing</keyword>
<keyword id="KW-0106">Calcium</keyword>
<keyword id="KW-0112">Calmodulin-binding</keyword>
<keyword id="KW-0965">Cell junction</keyword>
<keyword id="KW-1003">Cell membrane</keyword>
<keyword id="KW-0186">Copper</keyword>
<keyword id="KW-0963">Cytoplasm</keyword>
<keyword id="KW-0206">Cytoskeleton</keyword>
<keyword id="KW-0945">Host-virus interaction</keyword>
<keyword id="KW-0446">Lipid-binding</keyword>
<keyword id="KW-0449">Lipoprotein</keyword>
<keyword id="KW-0472">Membrane</keyword>
<keyword id="KW-0493">Microtubule</keyword>
<keyword id="KW-0519">Myristate</keyword>
<keyword id="KW-0597">Phosphoprotein</keyword>
<keyword id="KW-1185">Reference proteome</keyword>
<organism>
    <name type="scientific">Arabidopsis thaliana</name>
    <name type="common">Mouse-ear cress</name>
    <dbReference type="NCBI Taxonomy" id="3702"/>
    <lineage>
        <taxon>Eukaryota</taxon>
        <taxon>Viridiplantae</taxon>
        <taxon>Streptophyta</taxon>
        <taxon>Embryophyta</taxon>
        <taxon>Tracheophyta</taxon>
        <taxon>Spermatophyta</taxon>
        <taxon>Magnoliopsida</taxon>
        <taxon>eudicotyledons</taxon>
        <taxon>Gunneridae</taxon>
        <taxon>Pentapetalae</taxon>
        <taxon>rosids</taxon>
        <taxon>malvids</taxon>
        <taxon>Brassicales</taxon>
        <taxon>Brassicaceae</taxon>
        <taxon>Camelineae</taxon>
        <taxon>Arabidopsis</taxon>
    </lineage>
</organism>